<name>OPGD_PSESM</name>
<gene>
    <name type="primary">opgD</name>
    <name type="ordered locus">PSPTO_5542</name>
</gene>
<comment type="function">
    <text evidence="1">Probably involved in the control of the structural glucose backbone of osmoregulated periplasmic glucans (OPGs).</text>
</comment>
<comment type="pathway">
    <text>Glycan metabolism; osmoregulated periplasmic glucan (OPG) biosynthesis.</text>
</comment>
<comment type="subcellular location">
    <subcellularLocation>
        <location evidence="1">Periplasm</location>
    </subcellularLocation>
</comment>
<comment type="PTM">
    <text>Predicted to be exported by the Tat system. The position of the signal peptide cleavage has not been experimentally proven.</text>
</comment>
<comment type="similarity">
    <text evidence="3">Belongs to the OpgD/OpgG family.</text>
</comment>
<sequence>MNRRNLLKASMALAAYGSVSASGLYAARALAAAADGEIEHFDFAELQAHAKKLAGKGYVSNKQVLPPVLANMTPLQFNAIRYDPNHSLWKDVNGQLDVHFFHVGMGFKTPVRMYSVDPQNKQAREVHFRHDLFNYESSGIDKNLVKGDLGFAGFKLFKAPEIAINDVVSFLGASYFRAVDSNKQYGLSARGLAIDSYAKRQEEFPDFTKFWFETPDKNATRFVVYALLDSPSATGAYRFDIDCQAGQVVMEIDAHINARTDIQQLGISPMTSMFSCGTHERRMCDTIHPQIHDSDRLSMWRGNGEWICRPLNNPAKPQFSAFADKDPKGFGLVQSDHEFSSYQDTVVWYSRRPSLWVEPITAWGEGEVSLLELPTTGETMDNIVVFWTPKTPVKAGDSLNYGYKLFWSPLPPVSTPLAQVHATRSGMGGFLEGWAPGEHYPKTWARRFAVDFNGGGLDRLPEGTGIEPIVTVSHGKVQDFNILVLPDIKGYRITFDWVPDSDSVDPVEMRMFIRTGDRTLSETWMYQYFPPALDKRKYP</sequence>
<evidence type="ECO:0000250" key="1"/>
<evidence type="ECO:0000255" key="2"/>
<evidence type="ECO:0000305" key="3"/>
<protein>
    <recommendedName>
        <fullName>Glucans biosynthesis protein D</fullName>
    </recommendedName>
</protein>
<proteinExistence type="inferred from homology"/>
<accession>Q87TX5</accession>
<keyword id="KW-0574">Periplasm</keyword>
<keyword id="KW-1185">Reference proteome</keyword>
<keyword id="KW-0732">Signal</keyword>
<organism>
    <name type="scientific">Pseudomonas syringae pv. tomato (strain ATCC BAA-871 / DC3000)</name>
    <dbReference type="NCBI Taxonomy" id="223283"/>
    <lineage>
        <taxon>Bacteria</taxon>
        <taxon>Pseudomonadati</taxon>
        <taxon>Pseudomonadota</taxon>
        <taxon>Gammaproteobacteria</taxon>
        <taxon>Pseudomonadales</taxon>
        <taxon>Pseudomonadaceae</taxon>
        <taxon>Pseudomonas</taxon>
    </lineage>
</organism>
<feature type="signal peptide" description="Tat-type signal" evidence="2">
    <location>
        <begin position="1"/>
        <end position="29"/>
    </location>
</feature>
<feature type="chain" id="PRO_0000020209" description="Glucans biosynthesis protein D">
    <location>
        <begin position="30"/>
        <end position="539"/>
    </location>
</feature>
<dbReference type="EMBL" id="AE016853">
    <property type="protein sequence ID" value="AAO58961.1"/>
    <property type="molecule type" value="Genomic_DNA"/>
</dbReference>
<dbReference type="RefSeq" id="NP_795266.1">
    <property type="nucleotide sequence ID" value="NC_004578.1"/>
</dbReference>
<dbReference type="RefSeq" id="WP_005768286.1">
    <property type="nucleotide sequence ID" value="NC_004578.1"/>
</dbReference>
<dbReference type="SMR" id="Q87TX5"/>
<dbReference type="STRING" id="223283.PSPTO_5542"/>
<dbReference type="GeneID" id="1187234"/>
<dbReference type="KEGG" id="pst:PSPTO_5542"/>
<dbReference type="PATRIC" id="fig|223283.9.peg.5677"/>
<dbReference type="eggNOG" id="COG3131">
    <property type="taxonomic scope" value="Bacteria"/>
</dbReference>
<dbReference type="HOGENOM" id="CLU_023403_2_0_6"/>
<dbReference type="OrthoDB" id="335750at2"/>
<dbReference type="PhylomeDB" id="Q87TX5"/>
<dbReference type="UniPathway" id="UPA00637"/>
<dbReference type="Proteomes" id="UP000002515">
    <property type="component" value="Chromosome"/>
</dbReference>
<dbReference type="GO" id="GO:0030288">
    <property type="term" value="C:outer membrane-bounded periplasmic space"/>
    <property type="evidence" value="ECO:0007669"/>
    <property type="project" value="TreeGrafter"/>
</dbReference>
<dbReference type="GO" id="GO:0030246">
    <property type="term" value="F:carbohydrate binding"/>
    <property type="evidence" value="ECO:0007669"/>
    <property type="project" value="InterPro"/>
</dbReference>
<dbReference type="GO" id="GO:0003824">
    <property type="term" value="F:catalytic activity"/>
    <property type="evidence" value="ECO:0007669"/>
    <property type="project" value="InterPro"/>
</dbReference>
<dbReference type="GO" id="GO:0051274">
    <property type="term" value="P:beta-glucan biosynthetic process"/>
    <property type="evidence" value="ECO:0007669"/>
    <property type="project" value="TreeGrafter"/>
</dbReference>
<dbReference type="Gene3D" id="2.70.98.10">
    <property type="match status" value="1"/>
</dbReference>
<dbReference type="Gene3D" id="2.60.40.10">
    <property type="entry name" value="Immunoglobulins"/>
    <property type="match status" value="1"/>
</dbReference>
<dbReference type="HAMAP" id="MF_01068">
    <property type="entry name" value="MdoD_OpgD"/>
    <property type="match status" value="1"/>
</dbReference>
<dbReference type="InterPro" id="IPR011013">
    <property type="entry name" value="Gal_mutarotase_sf_dom"/>
</dbReference>
<dbReference type="InterPro" id="IPR014718">
    <property type="entry name" value="GH-type_carb-bd"/>
</dbReference>
<dbReference type="InterPro" id="IPR023724">
    <property type="entry name" value="Glucan_biosyn_MdoD"/>
</dbReference>
<dbReference type="InterPro" id="IPR014438">
    <property type="entry name" value="Glucan_biosyn_MdoG/MdoD"/>
</dbReference>
<dbReference type="InterPro" id="IPR007444">
    <property type="entry name" value="Glucan_biosyn_MdoG_C"/>
</dbReference>
<dbReference type="InterPro" id="IPR013783">
    <property type="entry name" value="Ig-like_fold"/>
</dbReference>
<dbReference type="InterPro" id="IPR014756">
    <property type="entry name" value="Ig_E-set"/>
</dbReference>
<dbReference type="InterPro" id="IPR006311">
    <property type="entry name" value="TAT_signal"/>
</dbReference>
<dbReference type="PANTHER" id="PTHR30504">
    <property type="entry name" value="GLUCANS BIOSYNTHESIS PROTEIN"/>
    <property type="match status" value="1"/>
</dbReference>
<dbReference type="PANTHER" id="PTHR30504:SF3">
    <property type="entry name" value="GLUCANS BIOSYNTHESIS PROTEIN D"/>
    <property type="match status" value="1"/>
</dbReference>
<dbReference type="Pfam" id="PF04349">
    <property type="entry name" value="MdoG"/>
    <property type="match status" value="1"/>
</dbReference>
<dbReference type="PIRSF" id="PIRSF006281">
    <property type="entry name" value="MdoG"/>
    <property type="match status" value="1"/>
</dbReference>
<dbReference type="SUPFAM" id="SSF81296">
    <property type="entry name" value="E set domains"/>
    <property type="match status" value="1"/>
</dbReference>
<dbReference type="SUPFAM" id="SSF74650">
    <property type="entry name" value="Galactose mutarotase-like"/>
    <property type="match status" value="1"/>
</dbReference>
<dbReference type="PROSITE" id="PS51318">
    <property type="entry name" value="TAT"/>
    <property type="match status" value="1"/>
</dbReference>
<reference key="1">
    <citation type="journal article" date="2003" name="Proc. Natl. Acad. Sci. U.S.A.">
        <title>The complete genome sequence of the Arabidopsis and tomato pathogen Pseudomonas syringae pv. tomato DC3000.</title>
        <authorList>
            <person name="Buell C.R."/>
            <person name="Joardar V."/>
            <person name="Lindeberg M."/>
            <person name="Selengut J."/>
            <person name="Paulsen I.T."/>
            <person name="Gwinn M.L."/>
            <person name="Dodson R.J."/>
            <person name="DeBoy R.T."/>
            <person name="Durkin A.S."/>
            <person name="Kolonay J.F."/>
            <person name="Madupu R."/>
            <person name="Daugherty S.C."/>
            <person name="Brinkac L.M."/>
            <person name="Beanan M.J."/>
            <person name="Haft D.H."/>
            <person name="Nelson W.C."/>
            <person name="Davidsen T.M."/>
            <person name="Zafar N."/>
            <person name="Zhou L."/>
            <person name="Liu J."/>
            <person name="Yuan Q."/>
            <person name="Khouri H.M."/>
            <person name="Fedorova N.B."/>
            <person name="Tran B."/>
            <person name="Russell D."/>
            <person name="Berry K.J."/>
            <person name="Utterback T.R."/>
            <person name="Van Aken S.E."/>
            <person name="Feldblyum T.V."/>
            <person name="D'Ascenzo M."/>
            <person name="Deng W.-L."/>
            <person name="Ramos A.R."/>
            <person name="Alfano J.R."/>
            <person name="Cartinhour S."/>
            <person name="Chatterjee A.K."/>
            <person name="Delaney T.P."/>
            <person name="Lazarowitz S.G."/>
            <person name="Martin G.B."/>
            <person name="Schneider D.J."/>
            <person name="Tang X."/>
            <person name="Bender C.L."/>
            <person name="White O."/>
            <person name="Fraser C.M."/>
            <person name="Collmer A."/>
        </authorList>
    </citation>
    <scope>NUCLEOTIDE SEQUENCE [LARGE SCALE GENOMIC DNA]</scope>
    <source>
        <strain>ATCC BAA-871 / DC3000</strain>
    </source>
</reference>